<dbReference type="EC" id="2.5.1.3" evidence="1"/>
<dbReference type="EMBL" id="CP000436">
    <property type="protein sequence ID" value="ABI24371.1"/>
    <property type="molecule type" value="Genomic_DNA"/>
</dbReference>
<dbReference type="SMR" id="Q0I131"/>
<dbReference type="KEGG" id="hso:HS_0090"/>
<dbReference type="eggNOG" id="COG0352">
    <property type="taxonomic scope" value="Bacteria"/>
</dbReference>
<dbReference type="HOGENOM" id="CLU_018272_3_2_6"/>
<dbReference type="UniPathway" id="UPA00060">
    <property type="reaction ID" value="UER00141"/>
</dbReference>
<dbReference type="GO" id="GO:0005737">
    <property type="term" value="C:cytoplasm"/>
    <property type="evidence" value="ECO:0007669"/>
    <property type="project" value="TreeGrafter"/>
</dbReference>
<dbReference type="GO" id="GO:0000287">
    <property type="term" value="F:magnesium ion binding"/>
    <property type="evidence" value="ECO:0007669"/>
    <property type="project" value="UniProtKB-UniRule"/>
</dbReference>
<dbReference type="GO" id="GO:0004789">
    <property type="term" value="F:thiamine-phosphate diphosphorylase activity"/>
    <property type="evidence" value="ECO:0007669"/>
    <property type="project" value="UniProtKB-UniRule"/>
</dbReference>
<dbReference type="GO" id="GO:0009228">
    <property type="term" value="P:thiamine biosynthetic process"/>
    <property type="evidence" value="ECO:0007669"/>
    <property type="project" value="UniProtKB-KW"/>
</dbReference>
<dbReference type="GO" id="GO:0009229">
    <property type="term" value="P:thiamine diphosphate biosynthetic process"/>
    <property type="evidence" value="ECO:0007669"/>
    <property type="project" value="UniProtKB-UniRule"/>
</dbReference>
<dbReference type="CDD" id="cd00564">
    <property type="entry name" value="TMP_TenI"/>
    <property type="match status" value="1"/>
</dbReference>
<dbReference type="FunFam" id="3.20.20.70:FF:000096">
    <property type="entry name" value="Thiamine-phosphate synthase"/>
    <property type="match status" value="1"/>
</dbReference>
<dbReference type="Gene3D" id="3.20.20.70">
    <property type="entry name" value="Aldolase class I"/>
    <property type="match status" value="1"/>
</dbReference>
<dbReference type="HAMAP" id="MF_00097">
    <property type="entry name" value="TMP_synthase"/>
    <property type="match status" value="1"/>
</dbReference>
<dbReference type="InterPro" id="IPR013785">
    <property type="entry name" value="Aldolase_TIM"/>
</dbReference>
<dbReference type="InterPro" id="IPR036206">
    <property type="entry name" value="ThiamineP_synth_sf"/>
</dbReference>
<dbReference type="InterPro" id="IPR022998">
    <property type="entry name" value="ThiamineP_synth_TenI"/>
</dbReference>
<dbReference type="InterPro" id="IPR034291">
    <property type="entry name" value="TMP_synthase"/>
</dbReference>
<dbReference type="NCBIfam" id="TIGR00693">
    <property type="entry name" value="thiE"/>
    <property type="match status" value="1"/>
</dbReference>
<dbReference type="PANTHER" id="PTHR20857">
    <property type="entry name" value="THIAMINE-PHOSPHATE PYROPHOSPHORYLASE"/>
    <property type="match status" value="1"/>
</dbReference>
<dbReference type="PANTHER" id="PTHR20857:SF15">
    <property type="entry name" value="THIAMINE-PHOSPHATE SYNTHASE"/>
    <property type="match status" value="1"/>
</dbReference>
<dbReference type="Pfam" id="PF02581">
    <property type="entry name" value="TMP-TENI"/>
    <property type="match status" value="1"/>
</dbReference>
<dbReference type="SUPFAM" id="SSF51391">
    <property type="entry name" value="Thiamin phosphate synthase"/>
    <property type="match status" value="1"/>
</dbReference>
<evidence type="ECO:0000255" key="1">
    <source>
        <dbReference type="HAMAP-Rule" id="MF_00097"/>
    </source>
</evidence>
<sequence>MQHKYDIATAMRLYFIAGSQDVTHFASDPADNLLSVLEQALQAGITCYQFREKGKRALQNPIAYKALAIACRNLCRKYKVPFVVNDDVALAVEIGADGIHVGQTDMPPHQVKRLCTGKCFVGTSVNTIEQGLIAQNDPNVDYFGVGPIFPTQSKEDAEPVLSPAFITQIRANHIDKPMVAIGGIKVKDVAMLMAKGANGVAVISAITQSNHIEKTVKELLR</sequence>
<accession>Q0I131</accession>
<comment type="function">
    <text evidence="1">Condenses 4-methyl-5-(beta-hydroxyethyl)thiazole monophosphate (THZ-P) and 2-methyl-4-amino-5-hydroxymethyl pyrimidine pyrophosphate (HMP-PP) to form thiamine monophosphate (TMP).</text>
</comment>
<comment type="catalytic activity">
    <reaction evidence="1">
        <text>2-[(2R,5Z)-2-carboxy-4-methylthiazol-5(2H)-ylidene]ethyl phosphate + 4-amino-2-methyl-5-(diphosphooxymethyl)pyrimidine + 2 H(+) = thiamine phosphate + CO2 + diphosphate</text>
        <dbReference type="Rhea" id="RHEA:47844"/>
        <dbReference type="ChEBI" id="CHEBI:15378"/>
        <dbReference type="ChEBI" id="CHEBI:16526"/>
        <dbReference type="ChEBI" id="CHEBI:33019"/>
        <dbReference type="ChEBI" id="CHEBI:37575"/>
        <dbReference type="ChEBI" id="CHEBI:57841"/>
        <dbReference type="ChEBI" id="CHEBI:62899"/>
        <dbReference type="EC" id="2.5.1.3"/>
    </reaction>
</comment>
<comment type="catalytic activity">
    <reaction evidence="1">
        <text>2-(2-carboxy-4-methylthiazol-5-yl)ethyl phosphate + 4-amino-2-methyl-5-(diphosphooxymethyl)pyrimidine + 2 H(+) = thiamine phosphate + CO2 + diphosphate</text>
        <dbReference type="Rhea" id="RHEA:47848"/>
        <dbReference type="ChEBI" id="CHEBI:15378"/>
        <dbReference type="ChEBI" id="CHEBI:16526"/>
        <dbReference type="ChEBI" id="CHEBI:33019"/>
        <dbReference type="ChEBI" id="CHEBI:37575"/>
        <dbReference type="ChEBI" id="CHEBI:57841"/>
        <dbReference type="ChEBI" id="CHEBI:62890"/>
        <dbReference type="EC" id="2.5.1.3"/>
    </reaction>
</comment>
<comment type="catalytic activity">
    <reaction evidence="1">
        <text>4-methyl-5-(2-phosphooxyethyl)-thiazole + 4-amino-2-methyl-5-(diphosphooxymethyl)pyrimidine + H(+) = thiamine phosphate + diphosphate</text>
        <dbReference type="Rhea" id="RHEA:22328"/>
        <dbReference type="ChEBI" id="CHEBI:15378"/>
        <dbReference type="ChEBI" id="CHEBI:33019"/>
        <dbReference type="ChEBI" id="CHEBI:37575"/>
        <dbReference type="ChEBI" id="CHEBI:57841"/>
        <dbReference type="ChEBI" id="CHEBI:58296"/>
        <dbReference type="EC" id="2.5.1.3"/>
    </reaction>
</comment>
<comment type="cofactor">
    <cofactor evidence="1">
        <name>Mg(2+)</name>
        <dbReference type="ChEBI" id="CHEBI:18420"/>
    </cofactor>
    <text evidence="1">Binds 1 Mg(2+) ion per subunit.</text>
</comment>
<comment type="pathway">
    <text evidence="1">Cofactor biosynthesis; thiamine diphosphate biosynthesis; thiamine phosphate from 4-amino-2-methyl-5-diphosphomethylpyrimidine and 4-methyl-5-(2-phosphoethyl)-thiazole: step 1/1.</text>
</comment>
<comment type="similarity">
    <text evidence="1">Belongs to the thiamine-phosphate synthase family.</text>
</comment>
<proteinExistence type="inferred from homology"/>
<gene>
    <name evidence="1" type="primary">thiE</name>
    <name type="ordered locus">HS_0090</name>
</gene>
<keyword id="KW-0460">Magnesium</keyword>
<keyword id="KW-0479">Metal-binding</keyword>
<keyword id="KW-0784">Thiamine biosynthesis</keyword>
<keyword id="KW-0808">Transferase</keyword>
<organism>
    <name type="scientific">Histophilus somni (strain 129Pt)</name>
    <name type="common">Haemophilus somnus</name>
    <dbReference type="NCBI Taxonomy" id="205914"/>
    <lineage>
        <taxon>Bacteria</taxon>
        <taxon>Pseudomonadati</taxon>
        <taxon>Pseudomonadota</taxon>
        <taxon>Gammaproteobacteria</taxon>
        <taxon>Pasteurellales</taxon>
        <taxon>Pasteurellaceae</taxon>
        <taxon>Histophilus</taxon>
    </lineage>
</organism>
<name>THIE_HISS1</name>
<feature type="chain" id="PRO_0000336397" description="Thiamine-phosphate synthase">
    <location>
        <begin position="1"/>
        <end position="221"/>
    </location>
</feature>
<feature type="binding site" evidence="1">
    <location>
        <begin position="49"/>
        <end position="53"/>
    </location>
    <ligand>
        <name>4-amino-2-methyl-5-(diphosphooxymethyl)pyrimidine</name>
        <dbReference type="ChEBI" id="CHEBI:57841"/>
    </ligand>
</feature>
<feature type="binding site" evidence="1">
    <location>
        <position position="85"/>
    </location>
    <ligand>
        <name>4-amino-2-methyl-5-(diphosphooxymethyl)pyrimidine</name>
        <dbReference type="ChEBI" id="CHEBI:57841"/>
    </ligand>
</feature>
<feature type="binding site" evidence="1">
    <location>
        <position position="86"/>
    </location>
    <ligand>
        <name>Mg(2+)</name>
        <dbReference type="ChEBI" id="CHEBI:18420"/>
    </ligand>
</feature>
<feature type="binding site" evidence="1">
    <location>
        <position position="105"/>
    </location>
    <ligand>
        <name>Mg(2+)</name>
        <dbReference type="ChEBI" id="CHEBI:18420"/>
    </ligand>
</feature>
<feature type="binding site" evidence="1">
    <location>
        <position position="124"/>
    </location>
    <ligand>
        <name>4-amino-2-methyl-5-(diphosphooxymethyl)pyrimidine</name>
        <dbReference type="ChEBI" id="CHEBI:57841"/>
    </ligand>
</feature>
<feature type="binding site" evidence="1">
    <location>
        <begin position="151"/>
        <end position="153"/>
    </location>
    <ligand>
        <name>2-[(2R,5Z)-2-carboxy-4-methylthiazol-5(2H)-ylidene]ethyl phosphate</name>
        <dbReference type="ChEBI" id="CHEBI:62899"/>
    </ligand>
</feature>
<feature type="binding site" evidence="1">
    <location>
        <position position="154"/>
    </location>
    <ligand>
        <name>4-amino-2-methyl-5-(diphosphooxymethyl)pyrimidine</name>
        <dbReference type="ChEBI" id="CHEBI:57841"/>
    </ligand>
</feature>
<feature type="binding site" evidence="1">
    <location>
        <position position="183"/>
    </location>
    <ligand>
        <name>2-[(2R,5Z)-2-carboxy-4-methylthiazol-5(2H)-ylidene]ethyl phosphate</name>
        <dbReference type="ChEBI" id="CHEBI:62899"/>
    </ligand>
</feature>
<feature type="binding site" evidence="1">
    <location>
        <begin position="203"/>
        <end position="204"/>
    </location>
    <ligand>
        <name>2-[(2R,5Z)-2-carboxy-4-methylthiazol-5(2H)-ylidene]ethyl phosphate</name>
        <dbReference type="ChEBI" id="CHEBI:62899"/>
    </ligand>
</feature>
<reference key="1">
    <citation type="journal article" date="2007" name="J. Bacteriol.">
        <title>Complete genome sequence of Haemophilus somnus (Histophilus somni) strain 129Pt and comparison to Haemophilus ducreyi 35000HP and Haemophilus influenzae Rd.</title>
        <authorList>
            <person name="Challacombe J.F."/>
            <person name="Duncan A.J."/>
            <person name="Brettin T.S."/>
            <person name="Bruce D."/>
            <person name="Chertkov O."/>
            <person name="Detter J.C."/>
            <person name="Han C.S."/>
            <person name="Misra M."/>
            <person name="Richardson P."/>
            <person name="Tapia R."/>
            <person name="Thayer N."/>
            <person name="Xie G."/>
            <person name="Inzana T.J."/>
        </authorList>
    </citation>
    <scope>NUCLEOTIDE SEQUENCE [LARGE SCALE GENOMIC DNA]</scope>
    <source>
        <strain>129Pt</strain>
    </source>
</reference>
<protein>
    <recommendedName>
        <fullName evidence="1">Thiamine-phosphate synthase</fullName>
        <shortName evidence="1">TP synthase</shortName>
        <shortName evidence="1">TPS</shortName>
        <ecNumber evidence="1">2.5.1.3</ecNumber>
    </recommendedName>
    <alternativeName>
        <fullName evidence="1">Thiamine-phosphate pyrophosphorylase</fullName>
        <shortName evidence="1">TMP pyrophosphorylase</shortName>
        <shortName evidence="1">TMP-PPase</shortName>
    </alternativeName>
</protein>